<dbReference type="EC" id="3.6.4.10" evidence="1"/>
<dbReference type="EMBL" id="Y09011">
    <property type="protein sequence ID" value="CAA70214.1"/>
    <property type="molecule type" value="Genomic_DNA"/>
</dbReference>
<dbReference type="EMBL" id="CM002241">
    <property type="protein sequence ID" value="EAA27331.1"/>
    <property type="molecule type" value="Genomic_DNA"/>
</dbReference>
<dbReference type="PIR" id="T50464">
    <property type="entry name" value="T50464"/>
</dbReference>
<dbReference type="RefSeq" id="XP_956567.1">
    <property type="nucleotide sequence ID" value="XM_951474.3"/>
</dbReference>
<dbReference type="SMR" id="P78695"/>
<dbReference type="FunCoup" id="P78695">
    <property type="interactions" value="1197"/>
</dbReference>
<dbReference type="IntAct" id="P78695">
    <property type="interactions" value="4"/>
</dbReference>
<dbReference type="MINT" id="P78695"/>
<dbReference type="STRING" id="367110.P78695"/>
<dbReference type="PaxDb" id="5141-EFNCRP00000003679"/>
<dbReference type="EnsemblFungi" id="EAA27331">
    <property type="protein sequence ID" value="EAA27331"/>
    <property type="gene ID" value="NCU03982"/>
</dbReference>
<dbReference type="GeneID" id="3872714"/>
<dbReference type="KEGG" id="ncr:NCU03982"/>
<dbReference type="VEuPathDB" id="FungiDB:NCU03982"/>
<dbReference type="HOGENOM" id="CLU_005965_7_0_1"/>
<dbReference type="InParanoid" id="P78695"/>
<dbReference type="OMA" id="VQRDIKH"/>
<dbReference type="OrthoDB" id="2401965at2759"/>
<dbReference type="Proteomes" id="UP000001805">
    <property type="component" value="Chromosome 5, Linkage Group VI"/>
</dbReference>
<dbReference type="GO" id="GO:0099021">
    <property type="term" value="C:cortical endoplasmic reticulum lumen"/>
    <property type="evidence" value="ECO:0007669"/>
    <property type="project" value="EnsemblFungi"/>
</dbReference>
<dbReference type="GO" id="GO:0005737">
    <property type="term" value="C:cytoplasm"/>
    <property type="evidence" value="ECO:0000318"/>
    <property type="project" value="GO_Central"/>
</dbReference>
<dbReference type="GO" id="GO:0034663">
    <property type="term" value="C:endoplasmic reticulum chaperone complex"/>
    <property type="evidence" value="ECO:0000318"/>
    <property type="project" value="GO_Central"/>
</dbReference>
<dbReference type="GO" id="GO:0005788">
    <property type="term" value="C:endoplasmic reticulum lumen"/>
    <property type="evidence" value="ECO:0000318"/>
    <property type="project" value="GO_Central"/>
</dbReference>
<dbReference type="GO" id="GO:0034099">
    <property type="term" value="C:luminal surveillance complex"/>
    <property type="evidence" value="ECO:0007669"/>
    <property type="project" value="EnsemblFungi"/>
</dbReference>
<dbReference type="GO" id="GO:0016020">
    <property type="term" value="C:membrane"/>
    <property type="evidence" value="ECO:0000318"/>
    <property type="project" value="GO_Central"/>
</dbReference>
<dbReference type="GO" id="GO:0031965">
    <property type="term" value="C:nuclear membrane"/>
    <property type="evidence" value="ECO:0007669"/>
    <property type="project" value="EnsemblFungi"/>
</dbReference>
<dbReference type="GO" id="GO:0005634">
    <property type="term" value="C:nucleus"/>
    <property type="evidence" value="ECO:0000318"/>
    <property type="project" value="GO_Central"/>
</dbReference>
<dbReference type="GO" id="GO:0099020">
    <property type="term" value="C:perinuclear endoplasmic reticulum lumen"/>
    <property type="evidence" value="ECO:0007669"/>
    <property type="project" value="EnsemblFungi"/>
</dbReference>
<dbReference type="GO" id="GO:0005524">
    <property type="term" value="F:ATP binding"/>
    <property type="evidence" value="ECO:0007669"/>
    <property type="project" value="UniProtKB-KW"/>
</dbReference>
<dbReference type="GO" id="GO:0016887">
    <property type="term" value="F:ATP hydrolysis activity"/>
    <property type="evidence" value="ECO:0000318"/>
    <property type="project" value="GO_Central"/>
</dbReference>
<dbReference type="GO" id="GO:0140662">
    <property type="term" value="F:ATP-dependent protein folding chaperone"/>
    <property type="evidence" value="ECO:0007669"/>
    <property type="project" value="InterPro"/>
</dbReference>
<dbReference type="GO" id="GO:0031072">
    <property type="term" value="F:heat shock protein binding"/>
    <property type="evidence" value="ECO:0000318"/>
    <property type="project" value="GO_Central"/>
</dbReference>
<dbReference type="GO" id="GO:0044183">
    <property type="term" value="F:protein folding chaperone"/>
    <property type="evidence" value="ECO:0000318"/>
    <property type="project" value="GO_Central"/>
</dbReference>
<dbReference type="GO" id="GO:0015450">
    <property type="term" value="F:protein-transporting ATPase activity"/>
    <property type="evidence" value="ECO:0007669"/>
    <property type="project" value="EnsemblFungi"/>
</dbReference>
<dbReference type="GO" id="GO:0051082">
    <property type="term" value="F:unfolded protein binding"/>
    <property type="evidence" value="ECO:0007669"/>
    <property type="project" value="EnsemblFungi"/>
</dbReference>
<dbReference type="GO" id="GO:0051085">
    <property type="term" value="P:chaperone cofactor-dependent protein refolding"/>
    <property type="evidence" value="ECO:0000318"/>
    <property type="project" value="GO_Central"/>
</dbReference>
<dbReference type="GO" id="GO:0030968">
    <property type="term" value="P:endoplasmic reticulum unfolded protein response"/>
    <property type="evidence" value="ECO:0000318"/>
    <property type="project" value="GO_Central"/>
</dbReference>
<dbReference type="GO" id="GO:0036503">
    <property type="term" value="P:ERAD pathway"/>
    <property type="evidence" value="ECO:0000318"/>
    <property type="project" value="GO_Central"/>
</dbReference>
<dbReference type="GO" id="GO:0070880">
    <property type="term" value="P:fungal-type cell wall beta-glucan biosynthetic process"/>
    <property type="evidence" value="ECO:0007669"/>
    <property type="project" value="EnsemblFungi"/>
</dbReference>
<dbReference type="GO" id="GO:0036498">
    <property type="term" value="P:IRE1-mediated unfolded protein response"/>
    <property type="evidence" value="ECO:0007669"/>
    <property type="project" value="EnsemblFungi"/>
</dbReference>
<dbReference type="GO" id="GO:0000742">
    <property type="term" value="P:karyogamy involved in conjugation with cellular fusion"/>
    <property type="evidence" value="ECO:0007669"/>
    <property type="project" value="EnsemblFungi"/>
</dbReference>
<dbReference type="GO" id="GO:0031204">
    <property type="term" value="P:post-translational protein targeting to membrane, translocation"/>
    <property type="evidence" value="ECO:0007669"/>
    <property type="project" value="EnsemblFungi"/>
</dbReference>
<dbReference type="GO" id="GO:0042026">
    <property type="term" value="P:protein refolding"/>
    <property type="evidence" value="ECO:0000318"/>
    <property type="project" value="GO_Central"/>
</dbReference>
<dbReference type="GO" id="GO:0006616">
    <property type="term" value="P:SRP-dependent cotranslational protein targeting to membrane, translocation"/>
    <property type="evidence" value="ECO:0007669"/>
    <property type="project" value="EnsemblFungi"/>
</dbReference>
<dbReference type="CDD" id="cd10241">
    <property type="entry name" value="ASKHA_NBD_HSP70_BiP"/>
    <property type="match status" value="1"/>
</dbReference>
<dbReference type="FunFam" id="1.20.1270.10:FF:000009">
    <property type="entry name" value="DnaK-type molecular chaperone BiP"/>
    <property type="match status" value="1"/>
</dbReference>
<dbReference type="FunFam" id="3.90.640.10:FF:000153">
    <property type="entry name" value="Endoplasmic reticulum chaperone BiP"/>
    <property type="match status" value="1"/>
</dbReference>
<dbReference type="FunFam" id="2.60.34.10:FF:000002">
    <property type="entry name" value="Heat shock 70 kDa"/>
    <property type="match status" value="1"/>
</dbReference>
<dbReference type="FunFam" id="3.30.420.40:FF:000172">
    <property type="entry name" value="Heat shock 70 kDa protein"/>
    <property type="match status" value="1"/>
</dbReference>
<dbReference type="FunFam" id="3.30.30.30:FF:000001">
    <property type="entry name" value="heat shock 70 kDa protein-like"/>
    <property type="match status" value="1"/>
</dbReference>
<dbReference type="FunFam" id="3.30.420.40:FF:000026">
    <property type="entry name" value="Heat shock protein 70"/>
    <property type="match status" value="1"/>
</dbReference>
<dbReference type="Gene3D" id="1.20.1270.10">
    <property type="match status" value="1"/>
</dbReference>
<dbReference type="Gene3D" id="3.30.30.30">
    <property type="match status" value="1"/>
</dbReference>
<dbReference type="Gene3D" id="3.30.420.40">
    <property type="match status" value="2"/>
</dbReference>
<dbReference type="Gene3D" id="3.90.640.10">
    <property type="entry name" value="Actin, Chain A, domain 4"/>
    <property type="match status" value="1"/>
</dbReference>
<dbReference type="Gene3D" id="2.60.34.10">
    <property type="entry name" value="Substrate Binding Domain Of DNAk, Chain A, domain 1"/>
    <property type="match status" value="1"/>
</dbReference>
<dbReference type="InterPro" id="IPR043129">
    <property type="entry name" value="ATPase_NBD"/>
</dbReference>
<dbReference type="InterPro" id="IPR042050">
    <property type="entry name" value="BIP_NBD"/>
</dbReference>
<dbReference type="InterPro" id="IPR018181">
    <property type="entry name" value="Heat_shock_70_CS"/>
</dbReference>
<dbReference type="InterPro" id="IPR029048">
    <property type="entry name" value="HSP70_C_sf"/>
</dbReference>
<dbReference type="InterPro" id="IPR029047">
    <property type="entry name" value="HSP70_peptide-bd_sf"/>
</dbReference>
<dbReference type="InterPro" id="IPR013126">
    <property type="entry name" value="Hsp_70_fam"/>
</dbReference>
<dbReference type="NCBIfam" id="NF001413">
    <property type="entry name" value="PRK00290.1"/>
    <property type="match status" value="1"/>
</dbReference>
<dbReference type="PANTHER" id="PTHR19375">
    <property type="entry name" value="HEAT SHOCK PROTEIN 70KDA"/>
    <property type="match status" value="1"/>
</dbReference>
<dbReference type="Pfam" id="PF00012">
    <property type="entry name" value="HSP70"/>
    <property type="match status" value="1"/>
</dbReference>
<dbReference type="PRINTS" id="PR00301">
    <property type="entry name" value="HEATSHOCK70"/>
</dbReference>
<dbReference type="SUPFAM" id="SSF53067">
    <property type="entry name" value="Actin-like ATPase domain"/>
    <property type="match status" value="2"/>
</dbReference>
<dbReference type="SUPFAM" id="SSF100934">
    <property type="entry name" value="Heat shock protein 70kD (HSP70), C-terminal subdomain"/>
    <property type="match status" value="1"/>
</dbReference>
<dbReference type="SUPFAM" id="SSF100920">
    <property type="entry name" value="Heat shock protein 70kD (HSP70), peptide-binding domain"/>
    <property type="match status" value="1"/>
</dbReference>
<dbReference type="PROSITE" id="PS00014">
    <property type="entry name" value="ER_TARGET"/>
    <property type="match status" value="1"/>
</dbReference>
<dbReference type="PROSITE" id="PS00297">
    <property type="entry name" value="HSP70_1"/>
    <property type="match status" value="1"/>
</dbReference>
<dbReference type="PROSITE" id="PS00329">
    <property type="entry name" value="HSP70_2"/>
    <property type="match status" value="1"/>
</dbReference>
<dbReference type="PROSITE" id="PS01036">
    <property type="entry name" value="HSP70_3"/>
    <property type="match status" value="1"/>
</dbReference>
<keyword id="KW-0067">ATP-binding</keyword>
<keyword id="KW-0143">Chaperone</keyword>
<keyword id="KW-0256">Endoplasmic reticulum</keyword>
<keyword id="KW-0378">Hydrolase</keyword>
<keyword id="KW-0547">Nucleotide-binding</keyword>
<keyword id="KW-1185">Reference proteome</keyword>
<keyword id="KW-0732">Signal</keyword>
<keyword id="KW-0346">Stress response</keyword>
<gene>
    <name type="primary">grp78</name>
    <name type="ORF">NCU03982</name>
</gene>
<comment type="function">
    <text evidence="2">Probably plays a role in facilitating the assembly of multimeric protein complexes inside the ER. Is required for secretory polypeptide translocation. May physically associate with SEC63 protein in the endoplasmic reticulum and this interaction may be regulated by ATP hydrolysis.</text>
</comment>
<comment type="catalytic activity">
    <reaction evidence="1">
        <text>ATP + H2O = ADP + phosphate + H(+)</text>
        <dbReference type="Rhea" id="RHEA:13065"/>
        <dbReference type="ChEBI" id="CHEBI:15377"/>
        <dbReference type="ChEBI" id="CHEBI:15378"/>
        <dbReference type="ChEBI" id="CHEBI:30616"/>
        <dbReference type="ChEBI" id="CHEBI:43474"/>
        <dbReference type="ChEBI" id="CHEBI:456216"/>
        <dbReference type="EC" id="3.6.4.10"/>
    </reaction>
</comment>
<comment type="activity regulation">
    <text evidence="1">The chaperone activity is regulated by ATP-induced allosteric coupling of the nucleotide-binding (NBD) and substrate-binding (SBD) domains. In the ADP-bound and nucleotide-free (apo) states, the two domains have little interaction. In contrast, in the ATP-bound state the two domains are tightly coupled, which results in drastically accelerated kinetics in both binding and release of polypeptide substrates. J domain-containing co-chaperones stimulate the ATPase activity and are required for efficient substrate recognition.</text>
</comment>
<comment type="subcellular location">
    <subcellularLocation>
        <location evidence="2 4">Endoplasmic reticulum lumen</location>
    </subcellularLocation>
</comment>
<comment type="similarity">
    <text evidence="5">Belongs to the heat shock protein 70 family.</text>
</comment>
<proteinExistence type="inferred from homology"/>
<sequence>MEHRTRSWALGLSILGFFALLFSAGFVQQAHANDTEAMGTVIGIDLGTTYSCVGVMQKGKVEILVNDQGNRITPSYVAFTDEERLVGDAAKNQAAANPHRTIFDIKRLIGRKFSDKDVQNDIKHFPYKVVSKDDKPVVKVEVKGEEKTFTPEEISAMILGKMKETAEGYLGKKVTHAVVTVPAYFNDNQRQATKDAGMIAGLNVLRIVNEPTAAAIAYGLDKTGEERQIIVYDLGGGTFDVSLLSIEQGVFEVLSTAGDTHLGGEDFDQRIINHFAKLFNKKHGVDVTKDAKAMGKLKREAEKAKRTLSSQMSTRIEIEAFYDGKDFSETLTRAKFEELNNDLFKKTLKPVEQVLKDAKVSKSEIDDIVLVGGSTRIPKVQALIEEFFNGKKASKGINPDEAVAFGAAVQAGVLSGEEGTEDIVLMDVNPLTLGIETTGGVMTKLIPRNTPIPTRKSQIFSTAADNQPVVLIQVYEGERSMTKDNNLLGKFELTGIPPAPRGVPQIEVSFELDANGILKVSAHDKGTGKAESITITNDKGRLTQEEIDRMVAEAEKYAEEDKATRERIEARNGLENYAFSLKNQVNDEDGLGGKIDEEDKETILDAVKEAQDWLEENAATASAEDFDEQKEKLSNVAYPITSKLYSQGGAGDDEPAGHDEL</sequence>
<evidence type="ECO:0000250" key="1">
    <source>
        <dbReference type="UniProtKB" id="P11021"/>
    </source>
</evidence>
<evidence type="ECO:0000250" key="2">
    <source>
        <dbReference type="UniProtKB" id="P16474"/>
    </source>
</evidence>
<evidence type="ECO:0000255" key="3"/>
<evidence type="ECO:0000255" key="4">
    <source>
        <dbReference type="PROSITE-ProRule" id="PRU10138"/>
    </source>
</evidence>
<evidence type="ECO:0000305" key="5"/>
<accession>P78695</accession>
<accession>Q7RV55</accession>
<organism>
    <name type="scientific">Neurospora crassa (strain ATCC 24698 / 74-OR23-1A / CBS 708.71 / DSM 1257 / FGSC 987)</name>
    <dbReference type="NCBI Taxonomy" id="367110"/>
    <lineage>
        <taxon>Eukaryota</taxon>
        <taxon>Fungi</taxon>
        <taxon>Dikarya</taxon>
        <taxon>Ascomycota</taxon>
        <taxon>Pezizomycotina</taxon>
        <taxon>Sordariomycetes</taxon>
        <taxon>Sordariomycetidae</taxon>
        <taxon>Sordariales</taxon>
        <taxon>Sordariaceae</taxon>
        <taxon>Neurospora</taxon>
    </lineage>
</organism>
<reference key="1">
    <citation type="journal article" date="1998" name="Biochim. Biophys. Acta">
        <title>Molecular analysis of a glucose-regulated gene (grp78) of Neurospora crassa.</title>
        <authorList>
            <person name="Techel D."/>
            <person name="Hafker T."/>
            <person name="Muschner S."/>
            <person name="Reimann M."/>
            <person name="Li Y."/>
            <person name="Monnerjahn C."/>
            <person name="Rensing L."/>
        </authorList>
    </citation>
    <scope>NUCLEOTIDE SEQUENCE [GENOMIC DNA]</scope>
    <source>
        <strain>Bd-A / FGSC 1858</strain>
    </source>
</reference>
<reference key="2">
    <citation type="journal article" date="2003" name="Nature">
        <title>The genome sequence of the filamentous fungus Neurospora crassa.</title>
        <authorList>
            <person name="Galagan J.E."/>
            <person name="Calvo S.E."/>
            <person name="Borkovich K.A."/>
            <person name="Selker E.U."/>
            <person name="Read N.D."/>
            <person name="Jaffe D.B."/>
            <person name="FitzHugh W."/>
            <person name="Ma L.-J."/>
            <person name="Smirnov S."/>
            <person name="Purcell S."/>
            <person name="Rehman B."/>
            <person name="Elkins T."/>
            <person name="Engels R."/>
            <person name="Wang S."/>
            <person name="Nielsen C.B."/>
            <person name="Butler J."/>
            <person name="Endrizzi M."/>
            <person name="Qui D."/>
            <person name="Ianakiev P."/>
            <person name="Bell-Pedersen D."/>
            <person name="Nelson M.A."/>
            <person name="Werner-Washburne M."/>
            <person name="Selitrennikoff C.P."/>
            <person name="Kinsey J.A."/>
            <person name="Braun E.L."/>
            <person name="Zelter A."/>
            <person name="Schulte U."/>
            <person name="Kothe G.O."/>
            <person name="Jedd G."/>
            <person name="Mewes H.-W."/>
            <person name="Staben C."/>
            <person name="Marcotte E."/>
            <person name="Greenberg D."/>
            <person name="Roy A."/>
            <person name="Foley K."/>
            <person name="Naylor J."/>
            <person name="Stange-Thomann N."/>
            <person name="Barrett R."/>
            <person name="Gnerre S."/>
            <person name="Kamal M."/>
            <person name="Kamvysselis M."/>
            <person name="Mauceli E.W."/>
            <person name="Bielke C."/>
            <person name="Rudd S."/>
            <person name="Frishman D."/>
            <person name="Krystofova S."/>
            <person name="Rasmussen C."/>
            <person name="Metzenberg R.L."/>
            <person name="Perkins D.D."/>
            <person name="Kroken S."/>
            <person name="Cogoni C."/>
            <person name="Macino G."/>
            <person name="Catcheside D.E.A."/>
            <person name="Li W."/>
            <person name="Pratt R.J."/>
            <person name="Osmani S.A."/>
            <person name="DeSouza C.P.C."/>
            <person name="Glass N.L."/>
            <person name="Orbach M.J."/>
            <person name="Berglund J.A."/>
            <person name="Voelker R."/>
            <person name="Yarden O."/>
            <person name="Plamann M."/>
            <person name="Seiler S."/>
            <person name="Dunlap J.C."/>
            <person name="Radford A."/>
            <person name="Aramayo R."/>
            <person name="Natvig D.O."/>
            <person name="Alex L.A."/>
            <person name="Mannhaupt G."/>
            <person name="Ebbole D.J."/>
            <person name="Freitag M."/>
            <person name="Paulsen I."/>
            <person name="Sachs M.S."/>
            <person name="Lander E.S."/>
            <person name="Nusbaum C."/>
            <person name="Birren B.W."/>
        </authorList>
    </citation>
    <scope>NUCLEOTIDE SEQUENCE [LARGE SCALE GENOMIC DNA]</scope>
    <source>
        <strain>ATCC 24698 / 74-OR23-1A / CBS 708.71 / DSM 1257 / FGSC 987</strain>
    </source>
</reference>
<feature type="signal peptide" evidence="3">
    <location>
        <begin position="1"/>
        <end position="32"/>
    </location>
</feature>
<feature type="chain" id="PRO_0000013583" description="Endoplasmic reticulum chaperone BiP">
    <location>
        <begin position="33"/>
        <end position="661"/>
    </location>
</feature>
<feature type="region of interest" description="Nucleotide-binding (NBD)" evidence="1">
    <location>
        <begin position="135"/>
        <end position="289"/>
    </location>
</feature>
<feature type="region of interest" description="Substrate-binding (SBD)" evidence="1">
    <location>
        <begin position="409"/>
        <end position="509"/>
    </location>
</feature>
<feature type="short sequence motif" description="Prevents secretion from ER" evidence="4">
    <location>
        <begin position="658"/>
        <end position="661"/>
    </location>
</feature>
<feature type="binding site" evidence="1">
    <location>
        <begin position="47"/>
        <end position="50"/>
    </location>
    <ligand>
        <name>ATP</name>
        <dbReference type="ChEBI" id="CHEBI:30616"/>
    </ligand>
</feature>
<feature type="binding site" evidence="1">
    <location>
        <position position="106"/>
    </location>
    <ligand>
        <name>ATP</name>
        <dbReference type="ChEBI" id="CHEBI:30616"/>
    </ligand>
</feature>
<feature type="binding site" evidence="1">
    <location>
        <begin position="236"/>
        <end position="238"/>
    </location>
    <ligand>
        <name>ATP</name>
        <dbReference type="ChEBI" id="CHEBI:30616"/>
    </ligand>
</feature>
<feature type="binding site" evidence="1">
    <location>
        <begin position="302"/>
        <end position="309"/>
    </location>
    <ligand>
        <name>ATP</name>
        <dbReference type="ChEBI" id="CHEBI:30616"/>
    </ligand>
</feature>
<feature type="binding site" evidence="1">
    <location>
        <begin position="373"/>
        <end position="376"/>
    </location>
    <ligand>
        <name>ATP</name>
        <dbReference type="ChEBI" id="CHEBI:30616"/>
    </ligand>
</feature>
<feature type="sequence conflict" description="In Ref. 1; CAA70214." evidence="5" ref="1">
    <original>Y</original>
    <variation>N</variation>
    <location>
        <position position="127"/>
    </location>
</feature>
<feature type="sequence conflict" description="In Ref. 1; CAA70214." evidence="5" ref="1">
    <original>T</original>
    <variation>N</variation>
    <location>
        <position position="527"/>
    </location>
</feature>
<feature type="sequence conflict" description="In Ref. 1; CAA70214." evidence="5" ref="1">
    <original>D</original>
    <variation>E</variation>
    <location>
        <position position="538"/>
    </location>
</feature>
<feature type="sequence conflict" description="In Ref. 1; CAA70214." evidence="5" ref="1">
    <original>N</original>
    <variation>ND</variation>
    <location>
        <position position="617"/>
    </location>
</feature>
<protein>
    <recommendedName>
        <fullName evidence="5">Endoplasmic reticulum chaperone BiP</fullName>
        <ecNumber evidence="1">3.6.4.10</ecNumber>
    </recommendedName>
    <alternativeName>
        <fullName evidence="5">Immunoglobulin heavy chain-binding protein homolog</fullName>
        <shortName evidence="5">BiP</shortName>
    </alternativeName>
</protein>
<name>BIP_NEUCR</name>